<comment type="function">
    <text evidence="1">Binds 16S rRNA, required for the assembly of 30S particles and may also be responsible for determining the conformation of the 16S rRNA at the A site.</text>
</comment>
<comment type="subunit">
    <text evidence="1">Part of the 30S ribosomal subunit. Contacts proteins S3 and S10.</text>
</comment>
<comment type="similarity">
    <text evidence="1">Belongs to the universal ribosomal protein uS14 family.</text>
</comment>
<feature type="chain" id="PRO_1000128320" description="Small ribosomal subunit protein uS14">
    <location>
        <begin position="1"/>
        <end position="101"/>
    </location>
</feature>
<name>RS14_BRUA2</name>
<keyword id="KW-1185">Reference proteome</keyword>
<keyword id="KW-0687">Ribonucleoprotein</keyword>
<keyword id="KW-0689">Ribosomal protein</keyword>
<keyword id="KW-0694">RNA-binding</keyword>
<keyword id="KW-0699">rRNA-binding</keyword>
<proteinExistence type="inferred from homology"/>
<protein>
    <recommendedName>
        <fullName evidence="1">Small ribosomal subunit protein uS14</fullName>
    </recommendedName>
    <alternativeName>
        <fullName evidence="2">30S ribosomal protein S14</fullName>
    </alternativeName>
</protein>
<accession>Q2YRA8</accession>
<evidence type="ECO:0000255" key="1">
    <source>
        <dbReference type="HAMAP-Rule" id="MF_00537"/>
    </source>
</evidence>
<evidence type="ECO:0000305" key="2"/>
<dbReference type="EMBL" id="AM040264">
    <property type="protein sequence ID" value="CAJ11198.1"/>
    <property type="molecule type" value="Genomic_DNA"/>
</dbReference>
<dbReference type="RefSeq" id="WP_011382118.1">
    <property type="nucleotide sequence ID" value="NC_007618.1"/>
</dbReference>
<dbReference type="SMR" id="Q2YRA8"/>
<dbReference type="STRING" id="359391.BAB1_1242"/>
<dbReference type="KEGG" id="bmf:BAB1_1242"/>
<dbReference type="PATRIC" id="fig|359391.4.peg.1291"/>
<dbReference type="HOGENOM" id="CLU_139869_0_1_5"/>
<dbReference type="Proteomes" id="UP000002719">
    <property type="component" value="Chromosome I"/>
</dbReference>
<dbReference type="GO" id="GO:0005737">
    <property type="term" value="C:cytoplasm"/>
    <property type="evidence" value="ECO:0007669"/>
    <property type="project" value="UniProtKB-ARBA"/>
</dbReference>
<dbReference type="GO" id="GO:0015935">
    <property type="term" value="C:small ribosomal subunit"/>
    <property type="evidence" value="ECO:0007669"/>
    <property type="project" value="TreeGrafter"/>
</dbReference>
<dbReference type="GO" id="GO:0019843">
    <property type="term" value="F:rRNA binding"/>
    <property type="evidence" value="ECO:0007669"/>
    <property type="project" value="UniProtKB-UniRule"/>
</dbReference>
<dbReference type="GO" id="GO:0003735">
    <property type="term" value="F:structural constituent of ribosome"/>
    <property type="evidence" value="ECO:0007669"/>
    <property type="project" value="InterPro"/>
</dbReference>
<dbReference type="GO" id="GO:0006412">
    <property type="term" value="P:translation"/>
    <property type="evidence" value="ECO:0007669"/>
    <property type="project" value="UniProtKB-UniRule"/>
</dbReference>
<dbReference type="FunFam" id="1.10.287.1480:FF:000001">
    <property type="entry name" value="30S ribosomal protein S14"/>
    <property type="match status" value="1"/>
</dbReference>
<dbReference type="Gene3D" id="1.10.287.1480">
    <property type="match status" value="1"/>
</dbReference>
<dbReference type="HAMAP" id="MF_00537">
    <property type="entry name" value="Ribosomal_uS14_1"/>
    <property type="match status" value="1"/>
</dbReference>
<dbReference type="InterPro" id="IPR001209">
    <property type="entry name" value="Ribosomal_uS14"/>
</dbReference>
<dbReference type="InterPro" id="IPR023036">
    <property type="entry name" value="Ribosomal_uS14_bac/plastid"/>
</dbReference>
<dbReference type="InterPro" id="IPR018271">
    <property type="entry name" value="Ribosomal_uS14_CS"/>
</dbReference>
<dbReference type="NCBIfam" id="NF006477">
    <property type="entry name" value="PRK08881.1"/>
    <property type="match status" value="1"/>
</dbReference>
<dbReference type="PANTHER" id="PTHR19836">
    <property type="entry name" value="30S RIBOSOMAL PROTEIN S14"/>
    <property type="match status" value="1"/>
</dbReference>
<dbReference type="PANTHER" id="PTHR19836:SF19">
    <property type="entry name" value="SMALL RIBOSOMAL SUBUNIT PROTEIN US14M"/>
    <property type="match status" value="1"/>
</dbReference>
<dbReference type="Pfam" id="PF00253">
    <property type="entry name" value="Ribosomal_S14"/>
    <property type="match status" value="1"/>
</dbReference>
<dbReference type="SUPFAM" id="SSF57716">
    <property type="entry name" value="Glucocorticoid receptor-like (DNA-binding domain)"/>
    <property type="match status" value="1"/>
</dbReference>
<dbReference type="PROSITE" id="PS00527">
    <property type="entry name" value="RIBOSOMAL_S14"/>
    <property type="match status" value="1"/>
</dbReference>
<sequence length="101" mass="11666">MAQTSAVEKNKRREKLVKRHAVKRARLKAIVMDQGLPLEERFRATIRLAELPRNSAKVRIRNRCEVSGRPRGYYRKLKMSRIALRQLGSLGQIPGVVKSSW</sequence>
<reference key="1">
    <citation type="journal article" date="2005" name="Infect. Immun.">
        <title>Whole-genome analyses of speciation events in pathogenic Brucellae.</title>
        <authorList>
            <person name="Chain P.S."/>
            <person name="Comerci D.J."/>
            <person name="Tolmasky M.E."/>
            <person name="Larimer F.W."/>
            <person name="Malfatti S.A."/>
            <person name="Vergez L.M."/>
            <person name="Aguero F."/>
            <person name="Land M.L."/>
            <person name="Ugalde R.A."/>
            <person name="Garcia E."/>
        </authorList>
    </citation>
    <scope>NUCLEOTIDE SEQUENCE [LARGE SCALE GENOMIC DNA]</scope>
    <source>
        <strain>2308</strain>
    </source>
</reference>
<organism>
    <name type="scientific">Brucella abortus (strain 2308)</name>
    <dbReference type="NCBI Taxonomy" id="359391"/>
    <lineage>
        <taxon>Bacteria</taxon>
        <taxon>Pseudomonadati</taxon>
        <taxon>Pseudomonadota</taxon>
        <taxon>Alphaproteobacteria</taxon>
        <taxon>Hyphomicrobiales</taxon>
        <taxon>Brucellaceae</taxon>
        <taxon>Brucella/Ochrobactrum group</taxon>
        <taxon>Brucella</taxon>
    </lineage>
</organism>
<gene>
    <name evidence="1" type="primary">rpsN</name>
    <name type="ordered locus">BAB1_1242</name>
</gene>